<dbReference type="EMBL" id="KC954156">
    <property type="protein sequence ID" value="AHM24034.1"/>
    <property type="molecule type" value="mRNA"/>
</dbReference>
<dbReference type="SMR" id="X2ESR4"/>
<dbReference type="UniPathway" id="UPA00213"/>
<dbReference type="GO" id="GO:0016020">
    <property type="term" value="C:membrane"/>
    <property type="evidence" value="ECO:0007669"/>
    <property type="project" value="UniProtKB-SubCell"/>
</dbReference>
<dbReference type="GO" id="GO:0020037">
    <property type="term" value="F:heme binding"/>
    <property type="evidence" value="ECO:0007669"/>
    <property type="project" value="InterPro"/>
</dbReference>
<dbReference type="GO" id="GO:0005506">
    <property type="term" value="F:iron ion binding"/>
    <property type="evidence" value="ECO:0007669"/>
    <property type="project" value="InterPro"/>
</dbReference>
<dbReference type="GO" id="GO:0004497">
    <property type="term" value="F:monooxygenase activity"/>
    <property type="evidence" value="ECO:0007669"/>
    <property type="project" value="UniProtKB-KW"/>
</dbReference>
<dbReference type="GO" id="GO:0016705">
    <property type="term" value="F:oxidoreductase activity, acting on paired donors, with incorporation or reduction of molecular oxygen"/>
    <property type="evidence" value="ECO:0007669"/>
    <property type="project" value="InterPro"/>
</dbReference>
<dbReference type="GO" id="GO:0051762">
    <property type="term" value="P:sesquiterpene biosynthetic process"/>
    <property type="evidence" value="ECO:0007669"/>
    <property type="project" value="UniProtKB-ARBA"/>
</dbReference>
<dbReference type="GO" id="GO:0016114">
    <property type="term" value="P:terpenoid biosynthetic process"/>
    <property type="evidence" value="ECO:0007669"/>
    <property type="project" value="UniProtKB-UniPathway"/>
</dbReference>
<dbReference type="CDD" id="cd11072">
    <property type="entry name" value="CYP71-like"/>
    <property type="match status" value="1"/>
</dbReference>
<dbReference type="FunFam" id="1.10.630.10:FF:000011">
    <property type="entry name" value="Cytochrome P450 83B1"/>
    <property type="match status" value="1"/>
</dbReference>
<dbReference type="Gene3D" id="1.10.630.10">
    <property type="entry name" value="Cytochrome P450"/>
    <property type="match status" value="1"/>
</dbReference>
<dbReference type="InterPro" id="IPR001128">
    <property type="entry name" value="Cyt_P450"/>
</dbReference>
<dbReference type="InterPro" id="IPR017972">
    <property type="entry name" value="Cyt_P450_CS"/>
</dbReference>
<dbReference type="InterPro" id="IPR002401">
    <property type="entry name" value="Cyt_P450_E_grp-I"/>
</dbReference>
<dbReference type="InterPro" id="IPR036396">
    <property type="entry name" value="Cyt_P450_sf"/>
</dbReference>
<dbReference type="PANTHER" id="PTHR47955:SF16">
    <property type="entry name" value="CYTOCHROME P450"/>
    <property type="match status" value="1"/>
</dbReference>
<dbReference type="PANTHER" id="PTHR47955">
    <property type="entry name" value="CYTOCHROME P450 FAMILY 71 PROTEIN"/>
    <property type="match status" value="1"/>
</dbReference>
<dbReference type="Pfam" id="PF00067">
    <property type="entry name" value="p450"/>
    <property type="match status" value="1"/>
</dbReference>
<dbReference type="PRINTS" id="PR00463">
    <property type="entry name" value="EP450I"/>
</dbReference>
<dbReference type="PRINTS" id="PR00385">
    <property type="entry name" value="P450"/>
</dbReference>
<dbReference type="SUPFAM" id="SSF48264">
    <property type="entry name" value="Cytochrome P450"/>
    <property type="match status" value="1"/>
</dbReference>
<dbReference type="PROSITE" id="PS00086">
    <property type="entry name" value="CYTOCHROME_P450"/>
    <property type="match status" value="1"/>
</dbReference>
<feature type="chain" id="PRO_0000448401" description="Cytochrome P450 Tp4149">
    <location>
        <begin position="1"/>
        <end position="495"/>
    </location>
</feature>
<feature type="transmembrane region" description="Helical" evidence="2">
    <location>
        <begin position="4"/>
        <end position="24"/>
    </location>
</feature>
<feature type="transmembrane region" description="Helical" evidence="2">
    <location>
        <begin position="208"/>
        <end position="228"/>
    </location>
</feature>
<feature type="binding site" description="axial binding residue" evidence="1">
    <location>
        <position position="437"/>
    </location>
    <ligand>
        <name>heme</name>
        <dbReference type="ChEBI" id="CHEBI:30413"/>
    </ligand>
    <ligandPart>
        <name>Fe</name>
        <dbReference type="ChEBI" id="CHEBI:18248"/>
    </ligandPart>
</feature>
<feature type="glycosylation site" description="N-linked (GlcNAc...) asparagine" evidence="3">
    <location>
        <position position="419"/>
    </location>
</feature>
<comment type="function">
    <text evidence="5">Probably involved in the biosynthesis of germacrene-derived sesquiterpene lactones.</text>
</comment>
<comment type="cofactor">
    <cofactor evidence="1">
        <name>heme</name>
        <dbReference type="ChEBI" id="CHEBI:30413"/>
    </cofactor>
</comment>
<comment type="pathway">
    <text evidence="6">Secondary metabolite biosynthesis; terpenoid biosynthesis.</text>
</comment>
<comment type="subcellular location">
    <subcellularLocation>
        <location evidence="2">Membrane</location>
        <topology evidence="2">Multi-pass membrane protein</topology>
    </subcellularLocation>
</comment>
<comment type="developmental stage">
    <text evidence="4">During ovary development, accumulates until the stage 3 and fades out progressively to disappear at stage 6.</text>
</comment>
<comment type="similarity">
    <text evidence="7">Belongs to the cytochrome P450 family.</text>
</comment>
<reference key="1">
    <citation type="journal article" date="2014" name="Metab. Eng.">
        <title>Elucidation and in planta reconstitution of the parthenolide biosynthetic pathway.</title>
        <authorList>
            <person name="Liu Q."/>
            <person name="Manzano D."/>
            <person name="Tanic N."/>
            <person name="Pesic M."/>
            <person name="Bankovic J."/>
            <person name="Pateraki I."/>
            <person name="Ricard L."/>
            <person name="Ferrer A."/>
            <person name="de Vos R."/>
            <person name="van de Krol S."/>
            <person name="Bouwmeester H."/>
        </authorList>
    </citation>
    <scope>NUCLEOTIDE SEQUENCE [MRNA]</scope>
    <scope>DEVELOPMENTAL STAGE</scope>
</reference>
<reference key="2">
    <citation type="journal article" date="2019" name="Nat. Prod. Rep.">
        <title>Non-volatile natural products in plant glandular trichomes: chemistry, biological activities and biosynthesis.</title>
        <authorList>
            <person name="Liu Y."/>
            <person name="Jing S.-X."/>
            <person name="Luo S.-H."/>
            <person name="Li S.-H."/>
        </authorList>
    </citation>
    <scope>PATHWAY</scope>
    <scope>REVIEW</scope>
</reference>
<accession>X2ESR4</accession>
<organism>
    <name type="scientific">Tanacetum parthenium</name>
    <name type="common">Feverfew</name>
    <name type="synonym">Matricaria parthenium</name>
    <dbReference type="NCBI Taxonomy" id="127999"/>
    <lineage>
        <taxon>Eukaryota</taxon>
        <taxon>Viridiplantae</taxon>
        <taxon>Streptophyta</taxon>
        <taxon>Embryophyta</taxon>
        <taxon>Tracheophyta</taxon>
        <taxon>Spermatophyta</taxon>
        <taxon>Magnoliopsida</taxon>
        <taxon>eudicotyledons</taxon>
        <taxon>Gunneridae</taxon>
        <taxon>Pentapetalae</taxon>
        <taxon>asterids</taxon>
        <taxon>campanulids</taxon>
        <taxon>Asterales</taxon>
        <taxon>Asteraceae</taxon>
        <taxon>Asteroideae</taxon>
        <taxon>Anthemideae</taxon>
        <taxon>Anthemidinae</taxon>
        <taxon>Tanacetum</taxon>
    </lineage>
</organism>
<evidence type="ECO:0000250" key="1">
    <source>
        <dbReference type="UniProtKB" id="P04798"/>
    </source>
</evidence>
<evidence type="ECO:0000255" key="2"/>
<evidence type="ECO:0000255" key="3">
    <source>
        <dbReference type="PROSITE-ProRule" id="PRU00498"/>
    </source>
</evidence>
<evidence type="ECO:0000269" key="4">
    <source>
    </source>
</evidence>
<evidence type="ECO:0000303" key="5">
    <source>
    </source>
</evidence>
<evidence type="ECO:0000303" key="6">
    <source>
    </source>
</evidence>
<evidence type="ECO:0000305" key="7"/>
<evidence type="ECO:0000312" key="8">
    <source>
        <dbReference type="EMBL" id="AHM24034.1"/>
    </source>
</evidence>
<name>T4149_TANPA</name>
<proteinExistence type="evidence at transcript level"/>
<keyword id="KW-0325">Glycoprotein</keyword>
<keyword id="KW-0349">Heme</keyword>
<keyword id="KW-0408">Iron</keyword>
<keyword id="KW-0472">Membrane</keyword>
<keyword id="KW-0479">Metal-binding</keyword>
<keyword id="KW-0503">Monooxygenase</keyword>
<keyword id="KW-0560">Oxidoreductase</keyword>
<keyword id="KW-0812">Transmembrane</keyword>
<keyword id="KW-1133">Transmembrane helix</keyword>
<sequence>MANILSLETLLISWLSSFILMFFILKWVSFYSKTKKNLPPSPQKLPIIGNFHQLGPNPHRSLQALSEKHGPIMLLHLGSVPMLVASNSEVAQEIMKTHDVSFASRPNSPILNILLYGCKDIAFAPSGEYWRQLKSIIVSNLLSSTQVKSFKNVREKEIGHMIGVIGESYGSSVDMSALLVSLAENVICTVALGRKFDGLKLTSLLRRYLSMFNLFSVGSYIPWLSWVDQLSGLTGRATKVVKEFDEFLEVIIEDHANAKINGGKDFIDMLLNAQQDQTTGFAFQRDTIKAVIFDIFGGGIDSVSTSIDWVMSELVKHPNVMKKLQKEVTEISQGRSMVAEEDLEKMQYLKAVIKESWRLHPPVPLLIPRKSTNDVKLMGYDIQAGTQVMVNVWQIGRDPTLWDEPNEFRPERFSKGSVNYSGLNFEWLPFGVGRRACPGTQFGAAVIELAIANIVYKFDLALPNGVKHEDLDMSEKYGITVHRKNPLLVTASPRF</sequence>
<protein>
    <recommendedName>
        <fullName evidence="8">Cytochrome P450 Tp4149</fullName>
        <shortName evidence="5">Tp4149</shortName>
    </recommendedName>
</protein>